<protein>
    <recommendedName>
        <fullName>Uncharacterized sugar transferase HI_0872</fullName>
        <ecNumber>2.-.-.-</ecNumber>
    </recommendedName>
</protein>
<accession>Q57491</accession>
<comment type="function">
    <text evidence="1">May function as a sugar transferase.</text>
</comment>
<comment type="pathway">
    <text>Glycan metabolism; exopolysaccharide biosynthesis.</text>
</comment>
<comment type="subcellular location">
    <subcellularLocation>
        <location evidence="3">Cell membrane</location>
        <topology evidence="3">Multi-pass membrane protein</topology>
    </subcellularLocation>
</comment>
<comment type="similarity">
    <text evidence="3">Belongs to the bacterial sugar transferase family.</text>
</comment>
<dbReference type="EC" id="2.-.-.-"/>
<dbReference type="EMBL" id="L42023">
    <property type="protein sequence ID" value="AAC22530.1"/>
    <property type="molecule type" value="Genomic_DNA"/>
</dbReference>
<dbReference type="PIR" id="B64099">
    <property type="entry name" value="B64099"/>
</dbReference>
<dbReference type="RefSeq" id="NP_439033.1">
    <property type="nucleotide sequence ID" value="NC_000907.1"/>
</dbReference>
<dbReference type="SMR" id="Q57491"/>
<dbReference type="STRING" id="71421.HI_0872"/>
<dbReference type="DNASU" id="949841"/>
<dbReference type="EnsemblBacteria" id="AAC22530">
    <property type="protein sequence ID" value="AAC22530"/>
    <property type="gene ID" value="HI_0872"/>
</dbReference>
<dbReference type="KEGG" id="hin:HI_0872"/>
<dbReference type="PATRIC" id="fig|71421.8.peg.913"/>
<dbReference type="eggNOG" id="COG2148">
    <property type="taxonomic scope" value="Bacteria"/>
</dbReference>
<dbReference type="HOGENOM" id="CLU_024920_3_5_6"/>
<dbReference type="OrthoDB" id="9808602at2"/>
<dbReference type="PhylomeDB" id="Q57491"/>
<dbReference type="BioCyc" id="HINF71421:G1GJ1-912-MONOMER"/>
<dbReference type="UniPathway" id="UPA00631"/>
<dbReference type="Proteomes" id="UP000000579">
    <property type="component" value="Chromosome"/>
</dbReference>
<dbReference type="GO" id="GO:0005886">
    <property type="term" value="C:plasma membrane"/>
    <property type="evidence" value="ECO:0007669"/>
    <property type="project" value="UniProtKB-SubCell"/>
</dbReference>
<dbReference type="GO" id="GO:0016780">
    <property type="term" value="F:phosphotransferase activity, for other substituted phosphate groups"/>
    <property type="evidence" value="ECO:0000318"/>
    <property type="project" value="GO_Central"/>
</dbReference>
<dbReference type="GO" id="GO:0000271">
    <property type="term" value="P:polysaccharide biosynthetic process"/>
    <property type="evidence" value="ECO:0007669"/>
    <property type="project" value="UniProtKB-KW"/>
</dbReference>
<dbReference type="InterPro" id="IPR003362">
    <property type="entry name" value="Bact_transf"/>
</dbReference>
<dbReference type="InterPro" id="IPR017475">
    <property type="entry name" value="EPS_sugar_tfrase"/>
</dbReference>
<dbReference type="InterPro" id="IPR017472">
    <property type="entry name" value="Undecaprenyl-P_galact_Ptfrase"/>
</dbReference>
<dbReference type="NCBIfam" id="TIGR03025">
    <property type="entry name" value="EPS_sugtrans"/>
    <property type="match status" value="1"/>
</dbReference>
<dbReference type="NCBIfam" id="TIGR03022">
    <property type="entry name" value="WbaP_sugtrans"/>
    <property type="match status" value="1"/>
</dbReference>
<dbReference type="PANTHER" id="PTHR30576">
    <property type="entry name" value="COLANIC BIOSYNTHESIS UDP-GLUCOSE LIPID CARRIER TRANSFERASE"/>
    <property type="match status" value="1"/>
</dbReference>
<dbReference type="PANTHER" id="PTHR30576:SF4">
    <property type="entry name" value="UNDECAPRENYL-PHOSPHATE GALACTOSE PHOSPHOTRANSFERASE"/>
    <property type="match status" value="1"/>
</dbReference>
<dbReference type="Pfam" id="PF02397">
    <property type="entry name" value="Bac_transf"/>
    <property type="match status" value="1"/>
</dbReference>
<sequence length="471" mass="55217">MNRLFFSKIALWLLDFLTFNISFLLSLFVISYYHNGYEKYLPIYEIDDRTYIHAVLAGICVGWFAIRLRHYTYRKPFWFELKEIFRTLIIFAIFELAIVAFPKLYFSRYLWALTWGITFLLFPLARVLVKKFLIKSGWFLRDTIMIGSGDNAFDVYNALRDEPYLGFQVTHFISVSNISNNVKELNIPILNSMSSWTSVTKKTDQFIIALEDDEEVDRNNWLRYFSTNGYRSVSVIPTLRGLPLYNTDMSFMFSHEIMLLQMNNNLAKLSSRILKRTMDIVVGSLAIIIFSPVLLYLYFAVKKDGGNAIYGHPRIGRNGKTFNCLKFRTMAVNSKEVLDELLRTDPEARAEWEKDFKLKNDPRITKIGAFIRKTSLDELPQLFNVLKGEMSLVGPRPIVIDELERYEENVDYYLMARPGMTGLWQVSGRNNIDYNTRVYFDSWYVKNWSLWNDIAILFKTMNVVLNRDGAY</sequence>
<gene>
    <name type="ordered locus">HI_0872</name>
</gene>
<keyword id="KW-1003">Cell membrane</keyword>
<keyword id="KW-0270">Exopolysaccharide synthesis</keyword>
<keyword id="KW-0472">Membrane</keyword>
<keyword id="KW-1185">Reference proteome</keyword>
<keyword id="KW-0808">Transferase</keyword>
<keyword id="KW-0812">Transmembrane</keyword>
<keyword id="KW-1133">Transmembrane helix</keyword>
<reference key="1">
    <citation type="journal article" date="1995" name="Science">
        <title>Whole-genome random sequencing and assembly of Haemophilus influenzae Rd.</title>
        <authorList>
            <person name="Fleischmann R.D."/>
            <person name="Adams M.D."/>
            <person name="White O."/>
            <person name="Clayton R.A."/>
            <person name="Kirkness E.F."/>
            <person name="Kerlavage A.R."/>
            <person name="Bult C.J."/>
            <person name="Tomb J.-F."/>
            <person name="Dougherty B.A."/>
            <person name="Merrick J.M."/>
            <person name="McKenney K."/>
            <person name="Sutton G.G."/>
            <person name="FitzHugh W."/>
            <person name="Fields C.A."/>
            <person name="Gocayne J.D."/>
            <person name="Scott J.D."/>
            <person name="Shirley R."/>
            <person name="Liu L.-I."/>
            <person name="Glodek A."/>
            <person name="Kelley J.M."/>
            <person name="Weidman J.F."/>
            <person name="Phillips C.A."/>
            <person name="Spriggs T."/>
            <person name="Hedblom E."/>
            <person name="Cotton M.D."/>
            <person name="Utterback T.R."/>
            <person name="Hanna M.C."/>
            <person name="Nguyen D.T."/>
            <person name="Saudek D.M."/>
            <person name="Brandon R.C."/>
            <person name="Fine L.D."/>
            <person name="Fritchman J.L."/>
            <person name="Fuhrmann J.L."/>
            <person name="Geoghagen N.S.M."/>
            <person name="Gnehm C.L."/>
            <person name="McDonald L.A."/>
            <person name="Small K.V."/>
            <person name="Fraser C.M."/>
            <person name="Smith H.O."/>
            <person name="Venter J.C."/>
        </authorList>
    </citation>
    <scope>NUCLEOTIDE SEQUENCE [LARGE SCALE GENOMIC DNA]</scope>
    <source>
        <strain>ATCC 51907 / DSM 11121 / KW20 / Rd</strain>
    </source>
</reference>
<feature type="chain" id="PRO_0000166471" description="Uncharacterized sugar transferase HI_0872">
    <location>
        <begin position="1"/>
        <end position="471"/>
    </location>
</feature>
<feature type="transmembrane region" description="Helical" evidence="2">
    <location>
        <begin position="10"/>
        <end position="30"/>
    </location>
</feature>
<feature type="transmembrane region" description="Helical" evidence="2">
    <location>
        <begin position="46"/>
        <end position="66"/>
    </location>
</feature>
<feature type="transmembrane region" description="Helical" evidence="2">
    <location>
        <begin position="87"/>
        <end position="107"/>
    </location>
</feature>
<feature type="transmembrane region" description="Helical" evidence="2">
    <location>
        <begin position="280"/>
        <end position="300"/>
    </location>
</feature>
<name>Y872_HAEIN</name>
<evidence type="ECO:0000250" key="1"/>
<evidence type="ECO:0000255" key="2"/>
<evidence type="ECO:0000305" key="3"/>
<proteinExistence type="inferred from homology"/>
<organism>
    <name type="scientific">Haemophilus influenzae (strain ATCC 51907 / DSM 11121 / KW20 / Rd)</name>
    <dbReference type="NCBI Taxonomy" id="71421"/>
    <lineage>
        <taxon>Bacteria</taxon>
        <taxon>Pseudomonadati</taxon>
        <taxon>Pseudomonadota</taxon>
        <taxon>Gammaproteobacteria</taxon>
        <taxon>Pasteurellales</taxon>
        <taxon>Pasteurellaceae</taxon>
        <taxon>Haemophilus</taxon>
    </lineage>
</organism>